<evidence type="ECO:0000250" key="1">
    <source>
        <dbReference type="UniProtKB" id="Q96CG3"/>
    </source>
</evidence>
<evidence type="ECO:0000255" key="2">
    <source>
        <dbReference type="PROSITE-ProRule" id="PRU00086"/>
    </source>
</evidence>
<evidence type="ECO:0000256" key="3">
    <source>
        <dbReference type="SAM" id="MobiDB-lite"/>
    </source>
</evidence>
<evidence type="ECO:0000269" key="4">
    <source>
    </source>
</evidence>
<evidence type="ECO:0000269" key="5">
    <source>
    </source>
</evidence>
<evidence type="ECO:0000303" key="6">
    <source>
    </source>
</evidence>
<evidence type="ECO:0000303" key="7">
    <source>
    </source>
</evidence>
<evidence type="ECO:0000305" key="8"/>
<evidence type="ECO:0000312" key="9">
    <source>
        <dbReference type="MGI" id="MGI:2182965"/>
    </source>
</evidence>
<evidence type="ECO:0007829" key="10">
    <source>
        <dbReference type="PDB" id="6L9U"/>
    </source>
</evidence>
<evidence type="ECO:0007829" key="11">
    <source>
        <dbReference type="PDB" id="6L9V"/>
    </source>
</evidence>
<organism>
    <name type="scientific">Mus musculus</name>
    <name type="common">Mouse</name>
    <dbReference type="NCBI Taxonomy" id="10090"/>
    <lineage>
        <taxon>Eukaryota</taxon>
        <taxon>Metazoa</taxon>
        <taxon>Chordata</taxon>
        <taxon>Craniata</taxon>
        <taxon>Vertebrata</taxon>
        <taxon>Euteleostomi</taxon>
        <taxon>Mammalia</taxon>
        <taxon>Eutheria</taxon>
        <taxon>Euarchontoglires</taxon>
        <taxon>Glires</taxon>
        <taxon>Rodentia</taxon>
        <taxon>Myomorpha</taxon>
        <taxon>Muroidea</taxon>
        <taxon>Muridae</taxon>
        <taxon>Murinae</taxon>
        <taxon>Mus</taxon>
        <taxon>Mus</taxon>
    </lineage>
</organism>
<accession>Q793I8</accession>
<accession>Q3TLY9</accession>
<name>TIFA_MOUSE</name>
<protein>
    <recommendedName>
        <fullName evidence="7">TRAF-interacting protein with FHA domain-containing protein A</fullName>
    </recommendedName>
    <alternativeName>
        <fullName evidence="6">TRAF2-binding protein</fullName>
    </alternativeName>
</protein>
<sequence length="184" mass="21560">MSTFEDADTEETVTCLQMTIYHPGQQSGIFKSIRFCSKEKFPSIEVVKFGRNSNMCQYTFQDKQVSRIQFVLQPFKQFNSSVLSFEIKNMSKKTSLMVDNQELGYLNKMDLPYKCMLRFGEYQFLLQKEDGESVESFETQFIMSSRPLLQENNWPTQNPIPEDGMYSSYFTHRSSPSEMDENEL</sequence>
<comment type="function">
    <text evidence="1 4">Adapter molecule that plays a key role in the activation of pro-inflammatory NF-kappa-B signaling following detection of bacterial pathogen-associated molecular pattern metabolites (PAMPs) (PubMed:11798190). Promotes activation of an innate immune response by inducing the oligomerization and polyubiquitination of TRAF6, which leads to the activation of TAK1 and IKK through a proteasome-independent mechanism (By similarity). TIFA-dependent innate immune response is triggered by ADP-D-glycero-beta-D-manno-heptose (ADP-Heptose), a potent PAMP present in all Gram-negative and some Gram-positive bacteria: ADP-Heptose is recognized by ALPK1, which phosphorylates TIFA at Thr-9, leading to TIFA homooligomerization and subsequent activation of pro-inflammatory NF-kappa-B signaling (By similarity).</text>
</comment>
<comment type="subunit">
    <text evidence="1 4">Homooligomer; homooligomerizes following phosphorylation at Thr-9 (By similarity). Interacts with IRAK1, TRAF2 and TRAF6 (PubMed:11798190). Interacts with TIFAB; binding to TIFAB inhibits TRAF6 activation, possibly by inducing a conformational change in TIFA (By similarity). Interacts with ZCCHC11; binding to ZCCHC11 suppresses the TRAF6-dependent activation of NF-kappa-B (By similarity).</text>
</comment>
<comment type="interaction">
    <interactant intactId="EBI-524817">
        <id>Q793I8</id>
    </interactant>
    <interactant intactId="EBI-448533">
        <id>Q62406</id>
        <label>Irak1</label>
    </interactant>
    <organismsDiffer>false</organismsDiffer>
    <experiments>2</experiments>
</comment>
<comment type="interaction">
    <interactant intactId="EBI-524817">
        <id>Q793I8</id>
    </interactant>
    <interactant intactId="EBI-448028">
        <id>P70196</id>
        <label>Traf6</label>
    </interactant>
    <organismsDiffer>false</organismsDiffer>
    <experiments>2</experiments>
</comment>
<comment type="subcellular location">
    <subcellularLocation>
        <location evidence="1">Cytoplasm</location>
    </subcellularLocation>
    <text evidence="1">Colocalizes with lysosomal marker LAMP2 following homooligomerization and subsequent activation.</text>
</comment>
<comment type="tissue specificity">
    <text evidence="4 5">Highly expressed in the spleen and at lower levels in heart, brain, lung, liver, kidney and testes.</text>
</comment>
<comment type="domain">
    <text evidence="1">The FHA domain recognizes and binds phosphorylated Thr-9, promoting homooligomerization and subsequent activation of NF-kappa-B.</text>
</comment>
<comment type="PTM">
    <text evidence="1">Phosphorylated at Thr-9 following detection of ADP-D-glycero-beta-D-manno-heptose (ADP-Heptose) by ALPK1. Phosphorylation at Thr-9 by ALPK1 leads to the formation of an intermolecular binding between the FHA domain and phosphorylated Thr-9, promoting TIFA oligomerization and TIFA-mediated NF-kappa-B activation.</text>
</comment>
<comment type="similarity">
    <text evidence="8">Belongs to the TIFA family.</text>
</comment>
<keyword id="KW-0002">3D-structure</keyword>
<keyword id="KW-0963">Cytoplasm</keyword>
<keyword id="KW-0391">Immunity</keyword>
<keyword id="KW-0399">Innate immunity</keyword>
<keyword id="KW-0597">Phosphoprotein</keyword>
<keyword id="KW-1185">Reference proteome</keyword>
<reference key="1">
    <citation type="journal article" date="2003" name="J. Biol. Chem.">
        <title>Identification of TIFA as an adapter protein that links tumor necrosis factor receptor-associated factor 6 (TRAF6) to interleukin-1 (IL-1) receptor-associated kinase-1 (IRAK-1) in IL-1 receptor signaling.</title>
        <authorList>
            <person name="Takatsuna H."/>
            <person name="Kato H."/>
            <person name="Gohda J."/>
            <person name="Akiyama T."/>
            <person name="Moriya A."/>
            <person name="Okamoto Y."/>
            <person name="Yamagata Y."/>
            <person name="Otsuka M."/>
            <person name="Umezawa K."/>
            <person name="Semba K."/>
            <person name="Inoue J."/>
        </authorList>
    </citation>
    <scope>NUCLEOTIDE SEQUENCE [MRNA]</scope>
    <scope>TISSUE SPECIFICITY</scope>
</reference>
<reference key="2">
    <citation type="journal article" date="2005" name="Science">
        <title>The transcriptional landscape of the mammalian genome.</title>
        <authorList>
            <person name="Carninci P."/>
            <person name="Kasukawa T."/>
            <person name="Katayama S."/>
            <person name="Gough J."/>
            <person name="Frith M.C."/>
            <person name="Maeda N."/>
            <person name="Oyama R."/>
            <person name="Ravasi T."/>
            <person name="Lenhard B."/>
            <person name="Wells C."/>
            <person name="Kodzius R."/>
            <person name="Shimokawa K."/>
            <person name="Bajic V.B."/>
            <person name="Brenner S.E."/>
            <person name="Batalov S."/>
            <person name="Forrest A.R."/>
            <person name="Zavolan M."/>
            <person name="Davis M.J."/>
            <person name="Wilming L.G."/>
            <person name="Aidinis V."/>
            <person name="Allen J.E."/>
            <person name="Ambesi-Impiombato A."/>
            <person name="Apweiler R."/>
            <person name="Aturaliya R.N."/>
            <person name="Bailey T.L."/>
            <person name="Bansal M."/>
            <person name="Baxter L."/>
            <person name="Beisel K.W."/>
            <person name="Bersano T."/>
            <person name="Bono H."/>
            <person name="Chalk A.M."/>
            <person name="Chiu K.P."/>
            <person name="Choudhary V."/>
            <person name="Christoffels A."/>
            <person name="Clutterbuck D.R."/>
            <person name="Crowe M.L."/>
            <person name="Dalla E."/>
            <person name="Dalrymple B.P."/>
            <person name="de Bono B."/>
            <person name="Della Gatta G."/>
            <person name="di Bernardo D."/>
            <person name="Down T."/>
            <person name="Engstrom P."/>
            <person name="Fagiolini M."/>
            <person name="Faulkner G."/>
            <person name="Fletcher C.F."/>
            <person name="Fukushima T."/>
            <person name="Furuno M."/>
            <person name="Futaki S."/>
            <person name="Gariboldi M."/>
            <person name="Georgii-Hemming P."/>
            <person name="Gingeras T.R."/>
            <person name="Gojobori T."/>
            <person name="Green R.E."/>
            <person name="Gustincich S."/>
            <person name="Harbers M."/>
            <person name="Hayashi Y."/>
            <person name="Hensch T.K."/>
            <person name="Hirokawa N."/>
            <person name="Hill D."/>
            <person name="Huminiecki L."/>
            <person name="Iacono M."/>
            <person name="Ikeo K."/>
            <person name="Iwama A."/>
            <person name="Ishikawa T."/>
            <person name="Jakt M."/>
            <person name="Kanapin A."/>
            <person name="Katoh M."/>
            <person name="Kawasawa Y."/>
            <person name="Kelso J."/>
            <person name="Kitamura H."/>
            <person name="Kitano H."/>
            <person name="Kollias G."/>
            <person name="Krishnan S.P."/>
            <person name="Kruger A."/>
            <person name="Kummerfeld S.K."/>
            <person name="Kurochkin I.V."/>
            <person name="Lareau L.F."/>
            <person name="Lazarevic D."/>
            <person name="Lipovich L."/>
            <person name="Liu J."/>
            <person name="Liuni S."/>
            <person name="McWilliam S."/>
            <person name="Madan Babu M."/>
            <person name="Madera M."/>
            <person name="Marchionni L."/>
            <person name="Matsuda H."/>
            <person name="Matsuzawa S."/>
            <person name="Miki H."/>
            <person name="Mignone F."/>
            <person name="Miyake S."/>
            <person name="Morris K."/>
            <person name="Mottagui-Tabar S."/>
            <person name="Mulder N."/>
            <person name="Nakano N."/>
            <person name="Nakauchi H."/>
            <person name="Ng P."/>
            <person name="Nilsson R."/>
            <person name="Nishiguchi S."/>
            <person name="Nishikawa S."/>
            <person name="Nori F."/>
            <person name="Ohara O."/>
            <person name="Okazaki Y."/>
            <person name="Orlando V."/>
            <person name="Pang K.C."/>
            <person name="Pavan W.J."/>
            <person name="Pavesi G."/>
            <person name="Pesole G."/>
            <person name="Petrovsky N."/>
            <person name="Piazza S."/>
            <person name="Reed J."/>
            <person name="Reid J.F."/>
            <person name="Ring B.Z."/>
            <person name="Ringwald M."/>
            <person name="Rost B."/>
            <person name="Ruan Y."/>
            <person name="Salzberg S.L."/>
            <person name="Sandelin A."/>
            <person name="Schneider C."/>
            <person name="Schoenbach C."/>
            <person name="Sekiguchi K."/>
            <person name="Semple C.A."/>
            <person name="Seno S."/>
            <person name="Sessa L."/>
            <person name="Sheng Y."/>
            <person name="Shibata Y."/>
            <person name="Shimada H."/>
            <person name="Shimada K."/>
            <person name="Silva D."/>
            <person name="Sinclair B."/>
            <person name="Sperling S."/>
            <person name="Stupka E."/>
            <person name="Sugiura K."/>
            <person name="Sultana R."/>
            <person name="Takenaka Y."/>
            <person name="Taki K."/>
            <person name="Tammoja K."/>
            <person name="Tan S.L."/>
            <person name="Tang S."/>
            <person name="Taylor M.S."/>
            <person name="Tegner J."/>
            <person name="Teichmann S.A."/>
            <person name="Ueda H.R."/>
            <person name="van Nimwegen E."/>
            <person name="Verardo R."/>
            <person name="Wei C.L."/>
            <person name="Yagi K."/>
            <person name="Yamanishi H."/>
            <person name="Zabarovsky E."/>
            <person name="Zhu S."/>
            <person name="Zimmer A."/>
            <person name="Hide W."/>
            <person name="Bult C."/>
            <person name="Grimmond S.M."/>
            <person name="Teasdale R.D."/>
            <person name="Liu E.T."/>
            <person name="Brusic V."/>
            <person name="Quackenbush J."/>
            <person name="Wahlestedt C."/>
            <person name="Mattick J.S."/>
            <person name="Hume D.A."/>
            <person name="Kai C."/>
            <person name="Sasaki D."/>
            <person name="Tomaru Y."/>
            <person name="Fukuda S."/>
            <person name="Kanamori-Katayama M."/>
            <person name="Suzuki M."/>
            <person name="Aoki J."/>
            <person name="Arakawa T."/>
            <person name="Iida J."/>
            <person name="Imamura K."/>
            <person name="Itoh M."/>
            <person name="Kato T."/>
            <person name="Kawaji H."/>
            <person name="Kawagashira N."/>
            <person name="Kawashima T."/>
            <person name="Kojima M."/>
            <person name="Kondo S."/>
            <person name="Konno H."/>
            <person name="Nakano K."/>
            <person name="Ninomiya N."/>
            <person name="Nishio T."/>
            <person name="Okada M."/>
            <person name="Plessy C."/>
            <person name="Shibata K."/>
            <person name="Shiraki T."/>
            <person name="Suzuki S."/>
            <person name="Tagami M."/>
            <person name="Waki K."/>
            <person name="Watahiki A."/>
            <person name="Okamura-Oho Y."/>
            <person name="Suzuki H."/>
            <person name="Kawai J."/>
            <person name="Hayashizaki Y."/>
        </authorList>
    </citation>
    <scope>NUCLEOTIDE SEQUENCE [LARGE SCALE MRNA]</scope>
    <source>
        <strain>C57BL/6J</strain>
        <tissue>Bone marrow</tissue>
        <tissue>Liver</tissue>
        <tissue>Mammary gland</tissue>
        <tissue>Retina</tissue>
        <tissue>Thymus</tissue>
    </source>
</reference>
<reference key="3">
    <citation type="journal article" date="2004" name="Genome Res.">
        <title>The status, quality, and expansion of the NIH full-length cDNA project: the Mammalian Gene Collection (MGC).</title>
        <authorList>
            <consortium name="The MGC Project Team"/>
        </authorList>
    </citation>
    <scope>NUCLEOTIDE SEQUENCE [LARGE SCALE MRNA]</scope>
    <source>
        <tissue>Mammary gland</tissue>
    </source>
</reference>
<reference key="4">
    <citation type="journal article" date="2002" name="Biochem. Biophys. Res. Commun.">
        <title>T2BP, a novel TRAF2 binding protein, can activate NF-kappaB and AP-1 without TNF stimulation.</title>
        <authorList>
            <person name="Kanamori M."/>
            <person name="Suzuki H."/>
            <person name="Saito R."/>
            <person name="Muramatsu M."/>
            <person name="Hayashizaki Y."/>
        </authorList>
    </citation>
    <scope>FUNCTION</scope>
    <scope>INTERACTION WITH TRAF2</scope>
    <scope>TISSUE SPECIFICITY</scope>
</reference>
<reference key="5">
    <citation type="journal article" date="2010" name="Cell">
        <title>A tissue-specific atlas of mouse protein phosphorylation and expression.</title>
        <authorList>
            <person name="Huttlin E.L."/>
            <person name="Jedrychowski M.P."/>
            <person name="Elias J.E."/>
            <person name="Goswami T."/>
            <person name="Rad R."/>
            <person name="Beausoleil S.A."/>
            <person name="Villen J."/>
            <person name="Haas W."/>
            <person name="Sowa M.E."/>
            <person name="Gygi S.P."/>
        </authorList>
    </citation>
    <scope>IDENTIFICATION BY MASS SPECTROMETRY [LARGE SCALE ANALYSIS]</scope>
    <source>
        <tissue>Kidney</tissue>
        <tissue>Spleen</tissue>
    </source>
</reference>
<gene>
    <name evidence="7 9" type="primary">Tifa</name>
    <name evidence="6" type="synonym">T2bp</name>
</gene>
<proteinExistence type="evidence at protein level"/>
<dbReference type="EMBL" id="AB062111">
    <property type="protein sequence ID" value="BAB86903.1"/>
    <property type="molecule type" value="mRNA"/>
</dbReference>
<dbReference type="EMBL" id="AK041891">
    <property type="protein sequence ID" value="BAE43315.1"/>
    <property type="molecule type" value="mRNA"/>
</dbReference>
<dbReference type="EMBL" id="AK044221">
    <property type="protein sequence ID" value="BAC31825.1"/>
    <property type="molecule type" value="mRNA"/>
</dbReference>
<dbReference type="EMBL" id="AK149408">
    <property type="protein sequence ID" value="BAE28856.1"/>
    <property type="molecule type" value="mRNA"/>
</dbReference>
<dbReference type="EMBL" id="AK149864">
    <property type="protein sequence ID" value="BAE29133.1"/>
    <property type="molecule type" value="mRNA"/>
</dbReference>
<dbReference type="EMBL" id="AK151651">
    <property type="protein sequence ID" value="BAE30580.1"/>
    <property type="molecule type" value="mRNA"/>
</dbReference>
<dbReference type="EMBL" id="AK166239">
    <property type="protein sequence ID" value="BAE38653.1"/>
    <property type="molecule type" value="mRNA"/>
</dbReference>
<dbReference type="EMBL" id="BC065775">
    <property type="protein sequence ID" value="AAH65775.1"/>
    <property type="molecule type" value="mRNA"/>
</dbReference>
<dbReference type="CCDS" id="CCDS38628.1"/>
<dbReference type="RefSeq" id="NP_001343359.1">
    <property type="nucleotide sequence ID" value="NM_001356430.1"/>
</dbReference>
<dbReference type="RefSeq" id="NP_660115.1">
    <property type="nucleotide sequence ID" value="NM_145133.4"/>
</dbReference>
<dbReference type="RefSeq" id="XP_006501299.1">
    <property type="nucleotide sequence ID" value="XM_006501236.3"/>
</dbReference>
<dbReference type="RefSeq" id="XP_006501300.1">
    <property type="nucleotide sequence ID" value="XM_006501237.4"/>
</dbReference>
<dbReference type="RefSeq" id="XP_006501301.1">
    <property type="nucleotide sequence ID" value="XM_006501238.5"/>
</dbReference>
<dbReference type="RefSeq" id="XP_006501302.1">
    <property type="nucleotide sequence ID" value="XM_006501239.3"/>
</dbReference>
<dbReference type="PDB" id="6L9U">
    <property type="method" value="X-ray"/>
    <property type="resolution" value="2.60 A"/>
    <property type="chains" value="A=1-184"/>
</dbReference>
<dbReference type="PDB" id="6L9V">
    <property type="method" value="X-ray"/>
    <property type="resolution" value="3.05 A"/>
    <property type="chains" value="A/B/C/D=1-184"/>
</dbReference>
<dbReference type="PDB" id="6L9W">
    <property type="method" value="X-ray"/>
    <property type="resolution" value="2.90 A"/>
    <property type="chains" value="A/B/C/D/E/F=1-184"/>
</dbReference>
<dbReference type="PDB" id="8WWY">
    <property type="method" value="X-ray"/>
    <property type="resolution" value="1.79 A"/>
    <property type="chains" value="A/C=1-150"/>
</dbReference>
<dbReference type="PDBsum" id="6L9U"/>
<dbReference type="PDBsum" id="6L9V"/>
<dbReference type="PDBsum" id="6L9W"/>
<dbReference type="PDBsum" id="8WWY"/>
<dbReference type="SASBDB" id="Q793I8"/>
<dbReference type="SMR" id="Q793I8"/>
<dbReference type="BioGRID" id="229244">
    <property type="interactions" value="4"/>
</dbReference>
<dbReference type="FunCoup" id="Q793I8">
    <property type="interactions" value="760"/>
</dbReference>
<dbReference type="IntAct" id="Q793I8">
    <property type="interactions" value="2"/>
</dbReference>
<dbReference type="STRING" id="10090.ENSMUSP00000127700"/>
<dbReference type="iPTMnet" id="Q793I8"/>
<dbReference type="PhosphoSitePlus" id="Q793I8"/>
<dbReference type="PaxDb" id="10090-ENSMUSP00000054036"/>
<dbReference type="ProteomicsDB" id="259446"/>
<dbReference type="Pumba" id="Q793I8"/>
<dbReference type="Antibodypedia" id="45213">
    <property type="antibodies" value="107 antibodies from 21 providers"/>
</dbReference>
<dbReference type="DNASU" id="211550"/>
<dbReference type="Ensembl" id="ENSMUST00000054483.14">
    <property type="protein sequence ID" value="ENSMUSP00000054036.8"/>
    <property type="gene ID" value="ENSMUSG00000046688.15"/>
</dbReference>
<dbReference type="Ensembl" id="ENSMUST00000163775.6">
    <property type="protein sequence ID" value="ENSMUSP00000132309.2"/>
    <property type="gene ID" value="ENSMUSG00000046688.15"/>
</dbReference>
<dbReference type="Ensembl" id="ENSMUST00000164447.3">
    <property type="protein sequence ID" value="ENSMUSP00000126692.2"/>
    <property type="gene ID" value="ENSMUSG00000046688.15"/>
</dbReference>
<dbReference type="Ensembl" id="ENSMUST00000171621.3">
    <property type="protein sequence ID" value="ENSMUSP00000127700.2"/>
    <property type="gene ID" value="ENSMUSG00000046688.15"/>
</dbReference>
<dbReference type="GeneID" id="211550"/>
<dbReference type="KEGG" id="mmu:211550"/>
<dbReference type="UCSC" id="uc008rhm.1">
    <property type="organism name" value="mouse"/>
</dbReference>
<dbReference type="AGR" id="MGI:2182965"/>
<dbReference type="CTD" id="92610"/>
<dbReference type="MGI" id="MGI:2182965">
    <property type="gene designation" value="Tifa"/>
</dbReference>
<dbReference type="VEuPathDB" id="HostDB:ENSMUSG00000046688"/>
<dbReference type="eggNOG" id="ENOG502S0RF">
    <property type="taxonomic scope" value="Eukaryota"/>
</dbReference>
<dbReference type="GeneTree" id="ENSGT00940000154589"/>
<dbReference type="HOGENOM" id="CLU_125520_0_0_1"/>
<dbReference type="InParanoid" id="Q793I8"/>
<dbReference type="OMA" id="TITCLQM"/>
<dbReference type="OrthoDB" id="9893545at2759"/>
<dbReference type="PhylomeDB" id="Q793I8"/>
<dbReference type="TreeFam" id="TF333218"/>
<dbReference type="Reactome" id="R-MMU-445989">
    <property type="pathway name" value="TAK1-dependent IKK and NF-kappa-B activation"/>
</dbReference>
<dbReference type="Reactome" id="R-MMU-9645460">
    <property type="pathway name" value="Alpha-protein kinase 1 signaling pathway"/>
</dbReference>
<dbReference type="BioGRID-ORCS" id="211550">
    <property type="hits" value="1 hit in 78 CRISPR screens"/>
</dbReference>
<dbReference type="ChiTaRS" id="Tifa">
    <property type="organism name" value="mouse"/>
</dbReference>
<dbReference type="PRO" id="PR:Q793I8"/>
<dbReference type="Proteomes" id="UP000000589">
    <property type="component" value="Chromosome 3"/>
</dbReference>
<dbReference type="RNAct" id="Q793I8">
    <property type="molecule type" value="protein"/>
</dbReference>
<dbReference type="Bgee" id="ENSMUSG00000046688">
    <property type="expression patterns" value="Expressed in paneth cell and 169 other cell types or tissues"/>
</dbReference>
<dbReference type="ExpressionAtlas" id="Q793I8">
    <property type="expression patterns" value="baseline and differential"/>
</dbReference>
<dbReference type="GO" id="GO:0005737">
    <property type="term" value="C:cytoplasm"/>
    <property type="evidence" value="ECO:0000250"/>
    <property type="project" value="UniProtKB"/>
</dbReference>
<dbReference type="GO" id="GO:0002753">
    <property type="term" value="P:cytoplasmic pattern recognition receptor signaling pathway"/>
    <property type="evidence" value="ECO:0000250"/>
    <property type="project" value="UniProtKB"/>
</dbReference>
<dbReference type="GO" id="GO:0045087">
    <property type="term" value="P:innate immune response"/>
    <property type="evidence" value="ECO:0000250"/>
    <property type="project" value="UniProtKB"/>
</dbReference>
<dbReference type="GO" id="GO:0043123">
    <property type="term" value="P:positive regulation of canonical NF-kappaB signal transduction"/>
    <property type="evidence" value="ECO:0000314"/>
    <property type="project" value="MGI"/>
</dbReference>
<dbReference type="GO" id="GO:0051260">
    <property type="term" value="P:protein homooligomerization"/>
    <property type="evidence" value="ECO:0000250"/>
    <property type="project" value="UniProtKB"/>
</dbReference>
<dbReference type="GO" id="GO:0033209">
    <property type="term" value="P:tumor necrosis factor-mediated signaling pathway"/>
    <property type="evidence" value="ECO:0000353"/>
    <property type="project" value="MGI"/>
</dbReference>
<dbReference type="CDD" id="cd22714">
    <property type="entry name" value="FHA_TIFA"/>
    <property type="match status" value="1"/>
</dbReference>
<dbReference type="InterPro" id="IPR000253">
    <property type="entry name" value="FHA_dom"/>
</dbReference>
<dbReference type="InterPro" id="IPR008984">
    <property type="entry name" value="SMAD_FHA_dom_sf"/>
</dbReference>
<dbReference type="InterPro" id="IPR033621">
    <property type="entry name" value="TIFA"/>
</dbReference>
<dbReference type="PANTHER" id="PTHR31266:SF2">
    <property type="entry name" value="TRAF-INTERACTING PROTEIN WITH FHA DOMAIN-CONTAINING PROTEIN A"/>
    <property type="match status" value="1"/>
</dbReference>
<dbReference type="PANTHER" id="PTHR31266">
    <property type="entry name" value="TRAF-INTERACTING PROTEIN WITH FHA DOMAIN-CONTAINING PROTEIN A FAMILY MEMBER"/>
    <property type="match status" value="1"/>
</dbReference>
<dbReference type="Pfam" id="PF00498">
    <property type="entry name" value="FHA"/>
    <property type="match status" value="1"/>
</dbReference>
<dbReference type="SUPFAM" id="SSF49879">
    <property type="entry name" value="SMAD/FHA domain"/>
    <property type="match status" value="1"/>
</dbReference>
<dbReference type="PROSITE" id="PS50006">
    <property type="entry name" value="FHA_DOMAIN"/>
    <property type="match status" value="1"/>
</dbReference>
<feature type="chain" id="PRO_0000320690" description="TRAF-interacting protein with FHA domain-containing protein A">
    <location>
        <begin position="1"/>
        <end position="184"/>
    </location>
</feature>
<feature type="domain" description="FHA" evidence="2">
    <location>
        <begin position="47"/>
        <end position="103"/>
    </location>
</feature>
<feature type="region of interest" description="Disordered" evidence="3">
    <location>
        <begin position="152"/>
        <end position="184"/>
    </location>
</feature>
<feature type="compositionally biased region" description="Polar residues" evidence="3">
    <location>
        <begin position="168"/>
        <end position="177"/>
    </location>
</feature>
<feature type="modified residue" description="Phosphothreonine" evidence="1">
    <location>
        <position position="9"/>
    </location>
</feature>
<feature type="sequence conflict" description="In Ref. 2; BAE38653." evidence="8" ref="2">
    <original>M</original>
    <variation>I</variation>
    <location>
        <position position="90"/>
    </location>
</feature>
<feature type="strand" evidence="10">
    <location>
        <begin position="13"/>
        <end position="21"/>
    </location>
</feature>
<feature type="helix" evidence="10">
    <location>
        <begin position="25"/>
        <end position="27"/>
    </location>
</feature>
<feature type="turn" evidence="10">
    <location>
        <begin position="28"/>
        <end position="32"/>
    </location>
</feature>
<feature type="strand" evidence="10">
    <location>
        <begin position="39"/>
        <end position="42"/>
    </location>
</feature>
<feature type="strand" evidence="10">
    <location>
        <begin position="47"/>
        <end position="51"/>
    </location>
</feature>
<feature type="turn" evidence="10">
    <location>
        <begin position="53"/>
        <end position="55"/>
    </location>
</feature>
<feature type="strand" evidence="10">
    <location>
        <begin position="57"/>
        <end position="59"/>
    </location>
</feature>
<feature type="strand" evidence="11">
    <location>
        <begin position="63"/>
        <end position="65"/>
    </location>
</feature>
<feature type="strand" evidence="10">
    <location>
        <begin position="70"/>
        <end position="75"/>
    </location>
</feature>
<feature type="strand" evidence="10">
    <location>
        <begin position="84"/>
        <end position="89"/>
    </location>
</feature>
<feature type="strand" evidence="10">
    <location>
        <begin position="92"/>
        <end position="94"/>
    </location>
</feature>
<feature type="strand" evidence="10">
    <location>
        <begin position="96"/>
        <end position="98"/>
    </location>
</feature>
<feature type="strand" evidence="10">
    <location>
        <begin position="101"/>
        <end position="103"/>
    </location>
</feature>
<feature type="strand" evidence="10">
    <location>
        <begin position="108"/>
        <end position="110"/>
    </location>
</feature>
<feature type="strand" evidence="10">
    <location>
        <begin position="113"/>
        <end position="119"/>
    </location>
</feature>
<feature type="strand" evidence="10">
    <location>
        <begin position="122"/>
        <end position="129"/>
    </location>
</feature>
<feature type="strand" evidence="10">
    <location>
        <begin position="132"/>
        <end position="143"/>
    </location>
</feature>